<organism>
    <name type="scientific">Escherichia coli (strain K12)</name>
    <dbReference type="NCBI Taxonomy" id="83333"/>
    <lineage>
        <taxon>Bacteria</taxon>
        <taxon>Pseudomonadati</taxon>
        <taxon>Pseudomonadota</taxon>
        <taxon>Gammaproteobacteria</taxon>
        <taxon>Enterobacterales</taxon>
        <taxon>Enterobacteriaceae</taxon>
        <taxon>Escherichia</taxon>
    </lineage>
</organism>
<reference key="1">
    <citation type="submission" date="1996-10" db="EMBL/GenBank/DDBJ databases">
        <authorList>
            <person name="Hatada E."/>
            <person name="Ohmori H."/>
            <person name="Qiao Y."/>
            <person name="Tsuji M."/>
            <person name="Fukuda R."/>
        </authorList>
    </citation>
    <scope>NUCLEOTIDE SEQUENCE [GENOMIC DNA]</scope>
    <source>
        <strain>K12 / W3110 / ATCC 27325 / DSM 5911</strain>
    </source>
</reference>
<reference key="2">
    <citation type="submission" date="1997-01" db="EMBL/GenBank/DDBJ databases">
        <title>Sequence of minutes 4-25 of Escherichia coli.</title>
        <authorList>
            <person name="Chung E."/>
            <person name="Allen E."/>
            <person name="Araujo R."/>
            <person name="Aparicio A.M."/>
            <person name="Davis K."/>
            <person name="Duncan M."/>
            <person name="Federspiel N."/>
            <person name="Hyman R."/>
            <person name="Kalman S."/>
            <person name="Komp C."/>
            <person name="Kurdi O."/>
            <person name="Lew H."/>
            <person name="Lin D."/>
            <person name="Namath A."/>
            <person name="Oefner P."/>
            <person name="Roberts D."/>
            <person name="Schramm S."/>
            <person name="Davis R.W."/>
        </authorList>
    </citation>
    <scope>NUCLEOTIDE SEQUENCE [LARGE SCALE GENOMIC DNA]</scope>
    <source>
        <strain>K12 / MG1655 / ATCC 47076</strain>
    </source>
</reference>
<reference key="3">
    <citation type="journal article" date="1997" name="Science">
        <title>The complete genome sequence of Escherichia coli K-12.</title>
        <authorList>
            <person name="Blattner F.R."/>
            <person name="Plunkett G. III"/>
            <person name="Bloch C.A."/>
            <person name="Perna N.T."/>
            <person name="Burland V."/>
            <person name="Riley M."/>
            <person name="Collado-Vides J."/>
            <person name="Glasner J.D."/>
            <person name="Rode C.K."/>
            <person name="Mayhew G.F."/>
            <person name="Gregor J."/>
            <person name="Davis N.W."/>
            <person name="Kirkpatrick H.A."/>
            <person name="Goeden M.A."/>
            <person name="Rose D.J."/>
            <person name="Mau B."/>
            <person name="Shao Y."/>
        </authorList>
    </citation>
    <scope>NUCLEOTIDE SEQUENCE [LARGE SCALE GENOMIC DNA]</scope>
    <source>
        <strain>K12 / MG1655 / ATCC 47076</strain>
    </source>
</reference>
<reference key="4">
    <citation type="journal article" date="2006" name="Mol. Syst. Biol.">
        <title>Highly accurate genome sequences of Escherichia coli K-12 strains MG1655 and W3110.</title>
        <authorList>
            <person name="Hayashi K."/>
            <person name="Morooka N."/>
            <person name="Yamamoto Y."/>
            <person name="Fujita K."/>
            <person name="Isono K."/>
            <person name="Choi S."/>
            <person name="Ohtsubo E."/>
            <person name="Baba T."/>
            <person name="Wanner B.L."/>
            <person name="Mori H."/>
            <person name="Horiuchi T."/>
        </authorList>
    </citation>
    <scope>NUCLEOTIDE SEQUENCE [LARGE SCALE GENOMIC DNA]</scope>
    <source>
        <strain>K12 / W3110 / ATCC 27325 / DSM 5911</strain>
    </source>
</reference>
<reference key="5">
    <citation type="journal article" date="1998" name="EMBO J.">
        <title>A new heat-shock gene, ppiD, encodes a peptidyl-prolyl isomerase required for folding of outer membrane proteins in Escherichia coli.</title>
        <authorList>
            <person name="Dartigalongue C."/>
            <person name="Raina S."/>
        </authorList>
    </citation>
    <scope>PRELIMINARY FUNCTION AS A PPIASE</scope>
    <scope>SUBCELLULAR LOCATION</scope>
    <scope>TOPOLOGY</scope>
    <scope>INDUCTION</scope>
    <scope>DISRUPTION PHENOTYPE</scope>
    <scope>MUTAGENESIS OF GLY-312; GLY-313; GLY-347 AND ILE-350</scope>
</reference>
<reference key="6">
    <citation type="journal article" date="2005" name="J. Biol. Chem.">
        <title>Protein complexes of the Escherichia coli cell envelope.</title>
        <authorList>
            <person name="Stenberg F."/>
            <person name="Chovanec P."/>
            <person name="Maslen S.L."/>
            <person name="Robinson C.V."/>
            <person name="Ilag L."/>
            <person name="von Heijne G."/>
            <person name="Daley D.O."/>
        </authorList>
    </citation>
    <scope>SUBUNIT</scope>
    <scope>SUBCELLULAR LOCATION</scope>
    <source>
        <strain>BL21-DE3</strain>
    </source>
</reference>
<reference key="7">
    <citation type="journal article" date="2005" name="J. Bacteriol.">
        <title>Periplasmic peptidyl prolyl cis-trans isomerases are not essential for viability, but SurA is required for pilus biogenesis in Escherichia coli.</title>
        <authorList>
            <person name="Justice S.S."/>
            <person name="Hunstad D.A."/>
            <person name="Harper J.R."/>
            <person name="Duguay A.R."/>
            <person name="Pinkner J.S."/>
            <person name="Bann J."/>
            <person name="Frieden C."/>
            <person name="Silhavy T.J."/>
            <person name="Hultgren S.J."/>
        </authorList>
    </citation>
    <scope>DISRUPTION PHENOTYPE</scope>
    <source>
        <strain>K12 / MC4100 / ATCC 35695 / DSM 6574</strain>
    </source>
</reference>
<reference key="8">
    <citation type="journal article" date="2008" name="Biochemistry">
        <title>The periplasmic chaperone PpiD interacts with secretory proteins exiting from the SecYEG translocon.</title>
        <authorList>
            <person name="Antonoaea R."/>
            <person name="Fuerst M."/>
            <person name="Nishiyama K."/>
            <person name="Mueller M."/>
        </authorList>
    </citation>
    <scope>FUNCTION</scope>
    <scope>DISRUPTION PHENOTYPE</scope>
</reference>
<reference key="9">
    <citation type="journal article" date="2008" name="FEBS J.">
        <title>The periplasmic peptidyl prolyl cis-trans isomerases PpiD and SurA have partially overlapping substrate specificities.</title>
        <authorList>
            <person name="Stymest K.H."/>
            <person name="Klappa P."/>
        </authorList>
    </citation>
    <scope>INTERACTION WITH PEPTIDE SUBSTRATES AND MISFOLDED PROTEINS</scope>
</reference>
<reference key="10">
    <citation type="journal article" date="2010" name="BMC Microbiol.">
        <title>PpiD is a player in the network of periplasmic chaperones in Escherichia coli.</title>
        <authorList>
            <person name="Matern Y."/>
            <person name="Barion B."/>
            <person name="Behrens-Kneip S."/>
        </authorList>
    </citation>
    <scope>FUNCTION</scope>
    <scope>OVEREXPRESSION</scope>
    <scope>DISRUPTION PHENOTYPE</scope>
    <scope>MUTAGENESIS OF GLY-347 AND ILE-350</scope>
</reference>
<reference key="11">
    <citation type="journal article" date="2011" name="J. Proteome Res.">
        <title>Systematic analysis of native membrane protein complexes in Escherichia coli.</title>
        <authorList>
            <person name="Maddalo G."/>
            <person name="Stenberg-Bruzell F."/>
            <person name="Gotzke H."/>
            <person name="Toddo S."/>
            <person name="Bjorkholm P."/>
            <person name="Eriksson H."/>
            <person name="Chovanec P."/>
            <person name="Genevaux P."/>
            <person name="Lehtio J."/>
            <person name="Ilag L.L."/>
            <person name="Daley D.O."/>
        </authorList>
    </citation>
    <scope>SUBCELLULAR LOCATION</scope>
    <scope>TOPOLOGY</scope>
    <scope>INTERACTION WITH YFGM</scope>
</reference>
<reference key="12">
    <citation type="journal article" date="2014" name="J. Biol. Chem.">
        <title>YfgM is an ancillary subunit of the SecYEG translocon in Escherichia coli.</title>
        <authorList>
            <person name="Goetzke H."/>
            <person name="Palombo I."/>
            <person name="Muheim C."/>
            <person name="Perrody E."/>
            <person name="Genevaux P."/>
            <person name="Kudva R."/>
            <person name="Mueller M."/>
            <person name="Daley D.O."/>
        </authorList>
    </citation>
    <scope>INTERACTION WITH YFGM</scope>
</reference>
<reference key="13">
    <citation type="journal article" date="2014" name="J. Biol. Chem.">
        <title>Dynamic interaction of the sec translocon with the chaperone PpiD.</title>
        <authorList>
            <person name="Sachelaru I."/>
            <person name="Petriman N.A."/>
            <person name="Kudva R."/>
            <person name="Koch H.G."/>
        </authorList>
    </citation>
    <scope>FUNCTION</scope>
    <scope>INTERACTION WITH THE SECYEG TRANSLOCON</scope>
    <scope>SUBCELLULAR LOCATION</scope>
</reference>
<reference key="14">
    <citation type="journal article" date="2018" name="Biochim. Biophys. Acta">
        <title>Involvement of PpiD in Sec-dependent protein translocation.</title>
        <authorList>
            <person name="Fuerst M."/>
            <person name="Zhou Y."/>
            <person name="Merfort J."/>
            <person name="Mueller M."/>
        </authorList>
    </citation>
    <scope>FUNCTION</scope>
    <scope>INTERACTION WITH THE SECYEG TRANSLOCON</scope>
</reference>
<reference key="15">
    <citation type="journal article" date="2019" name="J. Biol. Chem.">
        <title>Noncompetitive binding of PpiD and YidC to the SecYEG translocon expands the global view on the SecYEG interactome in Escherichia coli.</title>
        <authorList>
            <person name="Jauss B."/>
            <person name="Petriman N.A."/>
            <person name="Drepper F."/>
            <person name="Franz L."/>
            <person name="Sachelaru I."/>
            <person name="Welte T."/>
            <person name="Steinberg R."/>
            <person name="Warscheid B."/>
            <person name="Koch H.G."/>
        </authorList>
    </citation>
    <scope>INTERACTION WITH THE SECYEG TRANSLOCON; YFGM AND YIDC</scope>
</reference>
<reference key="16">
    <citation type="journal article" date="2020" name="Viruses">
        <title>The central spike complex of bacteriophage T4 contacts PpiD in the periplasm of Escherichia coli.</title>
        <authorList>
            <person name="Wenzel S."/>
            <person name="Shneider M.M."/>
            <person name="Leiman P.G."/>
            <person name="Kuhn A."/>
            <person name="Kiefer D."/>
        </authorList>
    </citation>
    <scope>FUNCTION (MICROBIAL INFECTION)</scope>
    <scope>INTERACTION WITH BACTERIOPHAGE T4 (MICROBIAL INFECTION)</scope>
    <scope>DISRUPTION PHENOTYPE (MICROBIAL INFECTION)</scope>
</reference>
<reference evidence="20" key="17">
    <citation type="journal article" date="2010" name="Protein Sci.">
        <title>The prolyl isomerase domain of PpiD from Escherichia coli shows a parvulin fold but is devoid of catalytic activity.</title>
        <authorList>
            <person name="Weininger U."/>
            <person name="Jakob R.P."/>
            <person name="Kovermann M."/>
            <person name="Balbach J."/>
            <person name="Schmid F.X."/>
        </authorList>
    </citation>
    <scope>STRUCTURE BY NMR OF 264-357</scope>
    <scope>LACK OF PPIASE ACTIVITY</scope>
    <scope>INTERACTION WITH PEPTIDE SUBSTRATES</scope>
    <scope>DOMAIN</scope>
</reference>
<keyword id="KW-0002">3D-structure</keyword>
<keyword id="KW-0997">Cell inner membrane</keyword>
<keyword id="KW-1003">Cell membrane</keyword>
<keyword id="KW-0143">Chaperone</keyword>
<keyword id="KW-0472">Membrane</keyword>
<keyword id="KW-1185">Reference proteome</keyword>
<keyword id="KW-0346">Stress response</keyword>
<keyword id="KW-0812">Transmembrane</keyword>
<keyword id="KW-1133">Transmembrane helix</keyword>
<feature type="chain" id="PRO_0000193423" description="Periplasmic chaperone PpiD">
    <location>
        <begin position="1"/>
        <end position="623"/>
    </location>
</feature>
<feature type="topological domain" description="Cytoplasmic" evidence="9 19">
    <location>
        <begin position="1"/>
        <end position="15"/>
    </location>
</feature>
<feature type="transmembrane region" description="Helical" evidence="1">
    <location>
        <begin position="16"/>
        <end position="36"/>
    </location>
</feature>
<feature type="topological domain" description="Periplasmic" evidence="9 19">
    <location>
        <begin position="37"/>
        <end position="623"/>
    </location>
</feature>
<feature type="domain" description="PpiC" evidence="2">
    <location>
        <begin position="266"/>
        <end position="355"/>
    </location>
</feature>
<feature type="mutagenesis site" description="Cannot complement a surA null mutant or reduce the htrA-lacZ activity induced by periplasmic stresses." evidence="15">
    <original>G</original>
    <variation>A</variation>
    <variation>R</variation>
    <location>
        <position position="312"/>
    </location>
</feature>
<feature type="mutagenesis site" description="Cannot complement a surA null mutant or reduce the htrA-lacZ activity induced by periplasmic stresses." evidence="15">
    <original>G</original>
    <variation>A</variation>
    <variation>R</variation>
    <location>
        <position position="313"/>
    </location>
</feature>
<feature type="mutagenesis site" description="Can complement the growth defect of surA skp double deletion mutant. Has originally been reported to eliminate PPIase activity and to result in the loss of its reported surA complementing function." evidence="8 15">
    <original>G</original>
    <variation>A</variation>
    <location>
        <position position="347"/>
    </location>
</feature>
<feature type="mutagenesis site" description="Can complement the growth defect of surA skp double deletion mutant. Has originally been reported to eliminate PPIase activity and to result in the loss of its reported surA complementing function." evidence="8 15">
    <original>I</original>
    <variation>A</variation>
    <location>
        <position position="350"/>
    </location>
</feature>
<feature type="mutagenesis site" description="Cannot complement a surA null mutant or reduce the htrA-lacZ activity induced by periplasmic stresses." evidence="15">
    <original>I</original>
    <variation>F</variation>
    <location>
        <position position="350"/>
    </location>
</feature>
<feature type="strand" evidence="21">
    <location>
        <begin position="268"/>
        <end position="278"/>
    </location>
</feature>
<feature type="helix" evidence="21">
    <location>
        <begin position="279"/>
        <end position="291"/>
    </location>
</feature>
<feature type="helix" evidence="21">
    <location>
        <begin position="295"/>
        <end position="301"/>
    </location>
</feature>
<feature type="helix" evidence="21">
    <location>
        <begin position="306"/>
        <end position="309"/>
    </location>
</feature>
<feature type="turn" evidence="21">
    <location>
        <begin position="310"/>
        <end position="312"/>
    </location>
</feature>
<feature type="strand" evidence="21">
    <location>
        <begin position="313"/>
        <end position="319"/>
    </location>
</feature>
<feature type="helix" evidence="21">
    <location>
        <begin position="325"/>
        <end position="328"/>
    </location>
</feature>
<feature type="strand" evidence="21">
    <location>
        <begin position="338"/>
        <end position="344"/>
    </location>
</feature>
<feature type="strand" evidence="21">
    <location>
        <begin position="347"/>
        <end position="357"/>
    </location>
</feature>
<gene>
    <name evidence="17" type="primary">ppiD</name>
    <name type="synonym">ybaU</name>
    <name type="ordered locus">b0441</name>
    <name type="ordered locus">JW0431</name>
</gene>
<sequence length="623" mass="68150">MMDSLRTAANSLVLKIIFGIIIVSFILTGVSGYLIGGGNNYAAKVNDQEISRGQFENAFNSERNRMQQQLGDQYSELAANEGYMKTLRQQVLNRLIDEALLDQYARELKLGISDEQVKQAIFATPAFQVDGKFDNSRYNGILNQMGMTADQYAQALRNQLTTQQLINGVAGTDFMLKGETDELAALVAQQRVVREATIDVNALAAKQPVTEQEIASYYEQNKNNFMTPEQFRVSYIKLDAATMQQPVSDADIQSYYDQHQDQFTQPQRTRYSIIQTKTEDEAKAVLDELNKGGDFAALAKEKSADIISARNGGDMGWLEDATIPDELKNAGLKEKGQLSGVIKSSVGFLIVRLDDIQPAKVKSLDEVRDDIAAKVKHEKALDAYYALQQKVSDAASNDTESLAGAEQAAGVKATQTGWFSKDNLPEELNFKPVADAIFNGGLVGENGAPGINSDIITVDGDRAFVLRISEHKPEAVKPLADVQEQVKALVQHNKAEQQAKVDAEKLLVDLKAGKGAEAMQAAGLKFGEPKTLSRSGRDPISQAAFALPLPAKDKPSYGMATDMQGNVVLLALDEVKQGSMPEDQKKAMVQGITQNNAQIVFEALMSNLRKEAKIKIGDALEQQ</sequence>
<dbReference type="EMBL" id="D82943">
    <property type="protein sequence ID" value="BAA11645.1"/>
    <property type="molecule type" value="Genomic_DNA"/>
</dbReference>
<dbReference type="EMBL" id="U82664">
    <property type="protein sequence ID" value="AAB40197.1"/>
    <property type="molecule type" value="Genomic_DNA"/>
</dbReference>
<dbReference type="EMBL" id="U00096">
    <property type="protein sequence ID" value="AAC73544.1"/>
    <property type="molecule type" value="Genomic_DNA"/>
</dbReference>
<dbReference type="EMBL" id="AP009048">
    <property type="protein sequence ID" value="BAE76221.1"/>
    <property type="molecule type" value="Genomic_DNA"/>
</dbReference>
<dbReference type="PIR" id="A64774">
    <property type="entry name" value="A64774"/>
</dbReference>
<dbReference type="RefSeq" id="NP_414975.1">
    <property type="nucleotide sequence ID" value="NC_000913.3"/>
</dbReference>
<dbReference type="RefSeq" id="WP_000969372.1">
    <property type="nucleotide sequence ID" value="NZ_SSZK01000009.1"/>
</dbReference>
<dbReference type="PDB" id="2KGJ">
    <property type="method" value="NMR"/>
    <property type="chains" value="A=264-357"/>
</dbReference>
<dbReference type="PDBsum" id="2KGJ"/>
<dbReference type="BMRB" id="P0ADY1"/>
<dbReference type="SMR" id="P0ADY1"/>
<dbReference type="BioGRID" id="4260732">
    <property type="interactions" value="213"/>
</dbReference>
<dbReference type="DIP" id="DIP-39902N"/>
<dbReference type="FunCoup" id="P0ADY1">
    <property type="interactions" value="288"/>
</dbReference>
<dbReference type="IntAct" id="P0ADY1">
    <property type="interactions" value="8"/>
</dbReference>
<dbReference type="STRING" id="511145.b0441"/>
<dbReference type="TCDB" id="3.A.5.1.1">
    <property type="family name" value="the general secretory pathway (sec) family"/>
</dbReference>
<dbReference type="jPOST" id="P0ADY1"/>
<dbReference type="PaxDb" id="511145-b0441"/>
<dbReference type="EnsemblBacteria" id="AAC73544">
    <property type="protein sequence ID" value="AAC73544"/>
    <property type="gene ID" value="b0441"/>
</dbReference>
<dbReference type="GeneID" id="93777013"/>
<dbReference type="GeneID" id="946056"/>
<dbReference type="KEGG" id="ecj:JW0431"/>
<dbReference type="KEGG" id="eco:b0441"/>
<dbReference type="KEGG" id="ecoc:C3026_02160"/>
<dbReference type="PATRIC" id="fig|1411691.4.peg.1835"/>
<dbReference type="EchoBASE" id="EB3038"/>
<dbReference type="eggNOG" id="COG0760">
    <property type="taxonomic scope" value="Bacteria"/>
</dbReference>
<dbReference type="HOGENOM" id="CLU_023843_1_1_6"/>
<dbReference type="InParanoid" id="P0ADY1"/>
<dbReference type="OMA" id="DNSQGWI"/>
<dbReference type="OrthoDB" id="9812372at2"/>
<dbReference type="PhylomeDB" id="P0ADY1"/>
<dbReference type="BioCyc" id="EcoCyc:G6242-MONOMER"/>
<dbReference type="EvolutionaryTrace" id="P0ADY1"/>
<dbReference type="PRO" id="PR:P0ADY1"/>
<dbReference type="Proteomes" id="UP000000625">
    <property type="component" value="Chromosome"/>
</dbReference>
<dbReference type="GO" id="GO:0005886">
    <property type="term" value="C:plasma membrane"/>
    <property type="evidence" value="ECO:0007669"/>
    <property type="project" value="UniProtKB-SubCell"/>
</dbReference>
<dbReference type="GO" id="GO:0042802">
    <property type="term" value="F:identical protein binding"/>
    <property type="evidence" value="ECO:0000353"/>
    <property type="project" value="IntAct"/>
</dbReference>
<dbReference type="GO" id="GO:0003755">
    <property type="term" value="F:peptidyl-prolyl cis-trans isomerase activity"/>
    <property type="evidence" value="ECO:0007669"/>
    <property type="project" value="InterPro"/>
</dbReference>
<dbReference type="GO" id="GO:0061077">
    <property type="term" value="P:chaperone-mediated protein folding"/>
    <property type="evidence" value="ECO:0000314"/>
    <property type="project" value="EcoCyc"/>
</dbReference>
<dbReference type="FunFam" id="1.10.4030.10:FF:000003">
    <property type="entry name" value="Peptidylprolyl isomerase"/>
    <property type="match status" value="1"/>
</dbReference>
<dbReference type="FunFam" id="3.10.50.40:FF:000021">
    <property type="entry name" value="Peptidylprolyl isomerase"/>
    <property type="match status" value="1"/>
</dbReference>
<dbReference type="Gene3D" id="3.10.50.40">
    <property type="match status" value="1"/>
</dbReference>
<dbReference type="Gene3D" id="1.10.4030.10">
    <property type="entry name" value="Porin chaperone SurA, peptide-binding domain"/>
    <property type="match status" value="1"/>
</dbReference>
<dbReference type="InterPro" id="IPR046357">
    <property type="entry name" value="PPIase_dom_sf"/>
</dbReference>
<dbReference type="InterPro" id="IPR000297">
    <property type="entry name" value="PPIase_PpiC"/>
</dbReference>
<dbReference type="InterPro" id="IPR023058">
    <property type="entry name" value="PPIase_PpiC_CS"/>
</dbReference>
<dbReference type="InterPro" id="IPR052029">
    <property type="entry name" value="PpiD_chaperone"/>
</dbReference>
<dbReference type="InterPro" id="IPR027304">
    <property type="entry name" value="Trigger_fact/SurA_dom_sf"/>
</dbReference>
<dbReference type="NCBIfam" id="NF008054">
    <property type="entry name" value="PRK10788.1"/>
    <property type="match status" value="1"/>
</dbReference>
<dbReference type="PANTHER" id="PTHR47529">
    <property type="entry name" value="PEPTIDYL-PROLYL CIS-TRANS ISOMERASE D"/>
    <property type="match status" value="1"/>
</dbReference>
<dbReference type="PANTHER" id="PTHR47529:SF1">
    <property type="entry name" value="PERIPLASMIC CHAPERONE PPID"/>
    <property type="match status" value="1"/>
</dbReference>
<dbReference type="Pfam" id="PF13145">
    <property type="entry name" value="Rotamase_2"/>
    <property type="match status" value="1"/>
</dbReference>
<dbReference type="Pfam" id="PF13624">
    <property type="entry name" value="SurA_N_3"/>
    <property type="match status" value="1"/>
</dbReference>
<dbReference type="SUPFAM" id="SSF54534">
    <property type="entry name" value="FKBP-like"/>
    <property type="match status" value="1"/>
</dbReference>
<dbReference type="SUPFAM" id="SSF109998">
    <property type="entry name" value="Triger factor/SurA peptide-binding domain-like"/>
    <property type="match status" value="1"/>
</dbReference>
<dbReference type="PROSITE" id="PS01096">
    <property type="entry name" value="PPIC_PPIASE_1"/>
    <property type="match status" value="1"/>
</dbReference>
<dbReference type="PROSITE" id="PS50198">
    <property type="entry name" value="PPIC_PPIASE_2"/>
    <property type="match status" value="1"/>
</dbReference>
<comment type="function">
    <text evidence="5 8 11 12">Chaperone that functions as a gatekeeper on the periplasmic side of the SecYEG translocon (PubMed:18439025, PubMed:20920237, PubMed:29097228). Facilitates the translocation of precursor proteins across SecYEG by interacting with the translocating substrate (PubMed:29097228). Also plays a role in the release of newly synthesized secreted proteins at the periplasmic exit site of the Sec translocon (PubMed:18439025, PubMed:20920237, PubMed:29097228). May be involved in the early periplasmic folding of many newly translocated proteins (PubMed:18439025, PubMed:20920237). Acts as a transient subunit of the Sec translocon that binds to the lateral gate of SecY and is detached by nascent membrane proteins but not by SecA (PubMed:24951590).</text>
</comment>
<comment type="function">
    <text evidence="7">Does not have peptidyl-prolyl isomerase (PPIase) activity. PPIase activity could not be generated by substitutions at the peptide binding site of the isolated parvulin-like domain.</text>
</comment>
<comment type="function">
    <text evidence="14">(Microbial infection) May play an important role in bacteriophage T4 infection and be involved in the penetration of the inner membrane by the bacteriophage injection machinery, resulting in a DNA-conducting channel to translocate the phage DNA into the interior of the cell.</text>
</comment>
<comment type="subunit">
    <text evidence="3 6 7 9 10 11 12 13">Interacts with the SecYEG translocon (PubMed:24951590, PubMed:29097228, PubMed:31699901). Binds to the lateral gate of SecY (PubMed:24951590, PubMed:31699901). Forms a complex with YfgM (PubMed:21210718, PubMed:24855643, PubMed:31699901). Also interacts with YidC (PubMed:31699901). Interacts with peptide substrates and misfolded proteins (PubMed:18498364, PubMed:19866485). Has been isolated as a homodimer and homotrimer from inner membrane preparations (PubMed:16079137).</text>
</comment>
<comment type="subunit">
    <text evidence="14">(Microbial infection) Interacts with the central spike complex of bacteriophage T4.</text>
</comment>
<comment type="interaction">
    <interactant intactId="EBI-562001">
        <id>P0ADY1</id>
    </interactant>
    <interactant intactId="EBI-562001">
        <id>P0ADY1</id>
        <label>ppiD</label>
    </interactant>
    <organismsDiffer>false</organismsDiffer>
    <experiments>2</experiments>
</comment>
<comment type="subcellular location">
    <subcellularLocation>
        <location evidence="3 9 15">Cell inner membrane</location>
        <topology evidence="9 15">Single-pass type II membrane protein</topology>
        <orientation evidence="9 15">Periplasmic side</orientation>
    </subcellularLocation>
    <text evidence="11">Located at the lateral gate of SecY.</text>
</comment>
<comment type="induction">
    <text evidence="15">By heat shock via the sigma factor RpoH (PubMed:9670013). Member of the two-component system CpxA/CpxR regulon (PubMed:9670013).</text>
</comment>
<comment type="domain">
    <text evidence="7">Consists of an N-terminal helix that anchors PpiD in the inner membrane, followed by three domains that face the periplasm. The first or the third domain are probably chaperone domains. The second domain is a parvulin-like domain, which is devoid of catalytic activity. It shows a parvulin fold and resembles most closely the inactive first parvulin domain of SurA, which is part of the chaperone unit of this protein and presumably involved in substrate recognition.</text>
</comment>
<comment type="disruption phenotype">
    <text evidence="4 5 8 15">Deletion of the gene retards the release of a translocating outer membrane protein into the periplasm (PubMed:18439025). Null mutation leads to the induction of the periplasmic stress response. Null mutants are hypersensitive to hydrophobic antibiotics such as novobiocin and to detergents such as SDS, and exhibit altered outer membrane proteins profile (PubMed:9670013). In contrast, another study shows that inactivation of the gene has no discernible effect on the levels of outer membrane proteins (PubMed:16267292). Lack of the gene confers increased temperature-sensitivity in a degP mutant (PubMed:20920237).</text>
</comment>
<comment type="disruption phenotype">
    <text evidence="14">(Microbial infection) Deletion of the gene leads to partial reduction in the plating efficiency of bacteriophage T4.</text>
</comment>
<comment type="miscellaneous">
    <text evidence="8">Overexpression restores viability of surA skp double deletion mutant but it does not completely compensate for the growth defect caused by the simultaneous lack of the SurA and Skp chaperones. Suppression of surA skp lethality does not require the parvulin domain but the membrane-localization of PpiD. In the absence of both SurA and Skp, overproduction of PpiD can, at least in part, counteract the defects in the biogenesis of OmpA and possibly of other OMPs.</text>
</comment>
<comment type="similarity">
    <text evidence="18">Belongs to the PpiD chaperone family.</text>
</comment>
<comment type="caution">
    <text evidence="7 19">Was originally thought to be a peptidyl-prolyl isomerase (PPIase). It was shown later that even if PpiD shows sequence similarity to PPIases, it is in fact devoid of PPIase activity (PubMed:19866485).</text>
</comment>
<name>PPID_ECOLI</name>
<accession>P0ADY1</accession>
<accession>P77241</accession>
<accession>Q2MBY5</accession>
<evidence type="ECO:0000255" key="1"/>
<evidence type="ECO:0000255" key="2">
    <source>
        <dbReference type="PROSITE-ProRule" id="PRU00278"/>
    </source>
</evidence>
<evidence type="ECO:0000269" key="3">
    <source>
    </source>
</evidence>
<evidence type="ECO:0000269" key="4">
    <source>
    </source>
</evidence>
<evidence type="ECO:0000269" key="5">
    <source>
    </source>
</evidence>
<evidence type="ECO:0000269" key="6">
    <source>
    </source>
</evidence>
<evidence type="ECO:0000269" key="7">
    <source>
    </source>
</evidence>
<evidence type="ECO:0000269" key="8">
    <source>
    </source>
</evidence>
<evidence type="ECO:0000269" key="9">
    <source>
    </source>
</evidence>
<evidence type="ECO:0000269" key="10">
    <source>
    </source>
</evidence>
<evidence type="ECO:0000269" key="11">
    <source>
    </source>
</evidence>
<evidence type="ECO:0000269" key="12">
    <source>
    </source>
</evidence>
<evidence type="ECO:0000269" key="13">
    <source>
    </source>
</evidence>
<evidence type="ECO:0000269" key="14">
    <source>
    </source>
</evidence>
<evidence type="ECO:0000269" key="15">
    <source>
    </source>
</evidence>
<evidence type="ECO:0000303" key="16">
    <source>
    </source>
</evidence>
<evidence type="ECO:0000303" key="17">
    <source>
    </source>
</evidence>
<evidence type="ECO:0000305" key="18"/>
<evidence type="ECO:0000305" key="19">
    <source>
    </source>
</evidence>
<evidence type="ECO:0007744" key="20">
    <source>
        <dbReference type="PDB" id="2KGJ"/>
    </source>
</evidence>
<evidence type="ECO:0007829" key="21">
    <source>
        <dbReference type="PDB" id="2KGJ"/>
    </source>
</evidence>
<proteinExistence type="evidence at protein level"/>
<protein>
    <recommendedName>
        <fullName evidence="16">Periplasmic chaperone PpiD</fullName>
    </recommendedName>
    <alternativeName>
        <fullName evidence="18">Periplasmic folding chaperone</fullName>
    </alternativeName>
</protein>